<proteinExistence type="evidence at protein level"/>
<accession>A0A443HK11</accession>
<dbReference type="EC" id="1.14.13.-" evidence="2"/>
<dbReference type="EMBL" id="RCNU01000014">
    <property type="protein sequence ID" value="RWQ92170.1"/>
    <property type="molecule type" value="Genomic_DNA"/>
</dbReference>
<dbReference type="SMR" id="A0A443HK11"/>
<dbReference type="STRING" id="264951.A0A443HK11"/>
<dbReference type="VEuPathDB" id="FungiDB:C8Q69DRAFT_480056"/>
<dbReference type="Proteomes" id="UP000283841">
    <property type="component" value="Unassembled WGS sequence"/>
</dbReference>
<dbReference type="GO" id="GO:0050660">
    <property type="term" value="F:flavin adenine dinucleotide binding"/>
    <property type="evidence" value="ECO:0007669"/>
    <property type="project" value="InterPro"/>
</dbReference>
<dbReference type="GO" id="GO:0004497">
    <property type="term" value="F:monooxygenase activity"/>
    <property type="evidence" value="ECO:0000314"/>
    <property type="project" value="UniProt"/>
</dbReference>
<dbReference type="GO" id="GO:0004499">
    <property type="term" value="F:N,N-dimethylaniline monooxygenase activity"/>
    <property type="evidence" value="ECO:0007669"/>
    <property type="project" value="InterPro"/>
</dbReference>
<dbReference type="GO" id="GO:0050661">
    <property type="term" value="F:NADP binding"/>
    <property type="evidence" value="ECO:0007669"/>
    <property type="project" value="InterPro"/>
</dbReference>
<dbReference type="GO" id="GO:0016218">
    <property type="term" value="F:polyketide synthase activity"/>
    <property type="evidence" value="ECO:0000314"/>
    <property type="project" value="UniProt"/>
</dbReference>
<dbReference type="GO" id="GO:0140783">
    <property type="term" value="P:(M)-viriditoxin biosynthetic process"/>
    <property type="evidence" value="ECO:0000314"/>
    <property type="project" value="GO_Central"/>
</dbReference>
<dbReference type="Gene3D" id="3.50.50.60">
    <property type="entry name" value="FAD/NAD(P)-binding domain"/>
    <property type="match status" value="3"/>
</dbReference>
<dbReference type="InterPro" id="IPR050775">
    <property type="entry name" value="FAD-binding_Monooxygenases"/>
</dbReference>
<dbReference type="InterPro" id="IPR036188">
    <property type="entry name" value="FAD/NAD-bd_sf"/>
</dbReference>
<dbReference type="InterPro" id="IPR020946">
    <property type="entry name" value="Flavin_mOase-like"/>
</dbReference>
<dbReference type="PANTHER" id="PTHR43098">
    <property type="entry name" value="L-ORNITHINE N(5)-MONOOXYGENASE-RELATED"/>
    <property type="match status" value="1"/>
</dbReference>
<dbReference type="PANTHER" id="PTHR43098:SF3">
    <property type="entry name" value="L-ORNITHINE N(5)-MONOOXYGENASE-RELATED"/>
    <property type="match status" value="1"/>
</dbReference>
<dbReference type="Pfam" id="PF00743">
    <property type="entry name" value="FMO-like"/>
    <property type="match status" value="1"/>
</dbReference>
<dbReference type="SUPFAM" id="SSF51905">
    <property type="entry name" value="FAD/NAD(P)-binding domain"/>
    <property type="match status" value="2"/>
</dbReference>
<evidence type="ECO:0000250" key="1">
    <source>
        <dbReference type="UniProtKB" id="H3JQW0"/>
    </source>
</evidence>
<evidence type="ECO:0000269" key="2">
    <source>
    </source>
</evidence>
<evidence type="ECO:0000269" key="3">
    <source>
    </source>
</evidence>
<evidence type="ECO:0000303" key="4">
    <source>
    </source>
</evidence>
<evidence type="ECO:0000305" key="5"/>
<keyword id="KW-0274">FAD</keyword>
<keyword id="KW-0285">Flavoprotein</keyword>
<keyword id="KW-0503">Monooxygenase</keyword>
<keyword id="KW-0521">NADP</keyword>
<keyword id="KW-0560">Oxidoreductase</keyword>
<keyword id="KW-1185">Reference proteome</keyword>
<reference key="1">
    <citation type="journal article" date="2018" name="Front. Microbiol.">
        <title>Genomic and genetic insights into a cosmopolitan fungus, Paecilomyces variotii (Eurotiales).</title>
        <authorList>
            <person name="Urquhart A.S."/>
            <person name="Mondo S.J."/>
            <person name="Maekelae M.R."/>
            <person name="Hane J.K."/>
            <person name="Wiebenga A."/>
            <person name="He G."/>
            <person name="Mihaltcheva S."/>
            <person name="Pangilinan J."/>
            <person name="Lipzen A."/>
            <person name="Barry K."/>
            <person name="de Vries R.P."/>
            <person name="Grigoriev I.V."/>
            <person name="Idnurm A."/>
        </authorList>
    </citation>
    <scope>NUCLEOTIDE SEQUENCE [LARGE SCALE GENOMIC DNA]</scope>
    <source>
        <strain>ATCC 90900 / JCM 12815 / CBS 101075</strain>
    </source>
</reference>
<reference key="2">
    <citation type="journal article" date="2019" name="Fungal Biol. Biotechnol.">
        <title>The fungal gene cluster for biosynthesis of the antibacterial agent viriditoxin.</title>
        <authorList>
            <person name="Urquhart A.S."/>
            <person name="Hu J."/>
            <person name="Chooi Y.H."/>
            <person name="Idnurm A."/>
        </authorList>
    </citation>
    <scope>IDENTIFICATION</scope>
    <scope>FUNCTION</scope>
    <scope>DISRUPTION PHENOTYPE</scope>
    <scope>PATHWAY</scope>
</reference>
<reference key="3">
    <citation type="journal article" date="2019" name="J. Am. Chem. Soc.">
        <title>Fungal dirigent protein controls the stereoselectivity of multicopper oxidase-catalyzed phenol coupling in viriditoxin biosynthesis.</title>
        <authorList>
            <person name="Hu J."/>
            <person name="Li H."/>
            <person name="Chooi Y.H."/>
        </authorList>
    </citation>
    <scope>FUNCTION</scope>
    <scope>CATALYTIC ACTIVITY</scope>
    <scope>PATHWAY</scope>
</reference>
<feature type="chain" id="PRO_0000448345" description="FAD-binding monooxygenase VdtE">
    <location>
        <begin position="1"/>
        <end position="571"/>
    </location>
</feature>
<feature type="binding site" evidence="1">
    <location>
        <begin position="44"/>
        <end position="47"/>
    </location>
    <ligand>
        <name>FAD</name>
        <dbReference type="ChEBI" id="CHEBI:57692"/>
    </ligand>
</feature>
<feature type="binding site" evidence="1">
    <location>
        <begin position="54"/>
        <end position="56"/>
    </location>
    <ligand>
        <name>NADP(+)</name>
        <dbReference type="ChEBI" id="CHEBI:58349"/>
    </ligand>
</feature>
<feature type="binding site" evidence="1">
    <location>
        <begin position="56"/>
        <end position="57"/>
    </location>
    <ligand>
        <name>FAD</name>
        <dbReference type="ChEBI" id="CHEBI:57692"/>
    </ligand>
</feature>
<feature type="binding site" evidence="1">
    <location>
        <position position="62"/>
    </location>
    <ligand>
        <name>FAD</name>
        <dbReference type="ChEBI" id="CHEBI:57692"/>
    </ligand>
</feature>
<feature type="binding site" evidence="1">
    <location>
        <begin position="187"/>
        <end position="193"/>
    </location>
    <ligand>
        <name>NADP(+)</name>
        <dbReference type="ChEBI" id="CHEBI:58349"/>
    </ligand>
</feature>
<feature type="binding site" evidence="1">
    <location>
        <begin position="210"/>
        <end position="211"/>
    </location>
    <ligand>
        <name>NADP(+)</name>
        <dbReference type="ChEBI" id="CHEBI:58349"/>
    </ligand>
</feature>
<feature type="site" description="Transition state stabilizer" evidence="1">
    <location>
        <position position="336"/>
    </location>
</feature>
<protein>
    <recommendedName>
        <fullName evidence="4">FAD-binding monooxygenase VdtE</fullName>
        <ecNumber evidence="2">1.14.13.-</ecNumber>
    </recommendedName>
    <alternativeName>
        <fullName evidence="4">Viriditoxin biosynthesis cluster protein E</fullName>
    </alternativeName>
</protein>
<sequence>MASMQEVDALVVGAGFGGLWMTNRLKEAGLNVLCVEKAPQAGGVWYWNCYPGARVDSRYPVYQYSDESLCKDWNWSELFPGYEEIRKYLSYAVDKWQLNSHIRYNTTVTGARFDESDHKWTVEGINGSHGTIRIRCRWYILALGFASKPYIPDFEGLNRFQGPCFHSSAWPQEGIDLKGRRVAVVGTGASAVQIIQTISKEVGHLTVYQRTPCTAMPMRQQSLTPEYQDNFKASGEMAATMRRTKYERFGGQDVQFVSRRWHEDTPEQRRAVFEQAWQKGGFHLLLSTYFEVFDDVEVNHAAWRFWAEKSRERIHNTKYKDILAPLEAVHAFGGKRTPFEQDYFEAFNRRNVDLIDMKASPILSFAEKGIITQNEGLQEFDVIILATGFDTNTGALTSIHIQDTDGILLKDRWSYDGVMTTFGMSTSKFPNMFFFYGPQAPTAFSNGPSCIELQGEFVEELILDMIGKGVTRVDTTSEAEKRWKESTLSLWNQFVFSSTKGFYTGENIPGKKAEPLNWFGGFPRYRKALTECRDGGYKEYSLRSLPKVPDPEHRGLIDKVAVVTSAQPVGA</sequence>
<organism>
    <name type="scientific">Byssochlamys spectabilis</name>
    <name type="common">Paecilomyces variotii</name>
    <dbReference type="NCBI Taxonomy" id="264951"/>
    <lineage>
        <taxon>Eukaryota</taxon>
        <taxon>Fungi</taxon>
        <taxon>Dikarya</taxon>
        <taxon>Ascomycota</taxon>
        <taxon>Pezizomycotina</taxon>
        <taxon>Eurotiomycetes</taxon>
        <taxon>Eurotiomycetidae</taxon>
        <taxon>Eurotiales</taxon>
        <taxon>Thermoascaceae</taxon>
        <taxon>Paecilomyces</taxon>
    </lineage>
</organism>
<name>VDTE1_BYSSP</name>
<gene>
    <name evidence="4" type="primary">VdtE</name>
    <name type="ORF">C8Q69DRAFT_480056</name>
</gene>
<comment type="function">
    <text evidence="2 3">FAD-binding monooxygenase; part of the gene cluster that mediates the biosynthesis of viriditoxin, one of the 'classical' secondary metabolites produced by fungi and that has antibacterial activity (PubMed:31045362, PubMed:31304040). The first step is performed by the polyketide synthase VdtA which condenses one acetyl-CoA and 6 malonyl-CoA units to form the heptaketide monomer backbone of viriditoxin (PubMed:31304040). The product of VdtA is then O-methylated on C7 by the O-methyltransferase VdtC (PubMed:31045362, PubMed:31304040). The O-methyl group is important for the stereoselective coupling of the monomers at the final step of viriditoxin biosynthesis (PubMed:31045362, PubMed:31304040). The short-chain dehydrogenase/reductase VdtF then acts as a stereospecific reductase converting the pyrone to dihydropyrone via the reduction of the C3-C4 double bond (PubMed:31045362, PubMed:31304040). The FAD-binding monooxygenase VdtE then converts the ketone group into a methyl-ester group to yield semi-viriditoxin (PubMed:31045362, PubMed:31304040). Finally, the laccase VdtB is involved in dimerization of 2 semi-viriditoxin molecules to yield the final viriditoxin (PubMed:31045362, PubMed:31304040). VdtB is responsible for the regioselective 6,6'-coupling of semi-viriditoxin, which yields (M)-viriditoxin and (P)-viriditoxin at a ratio of 1:2 (PubMed:31045362, PubMed:31304040). The non-catalytic carboxylesterase-like protein VdtD affects the stereochemistical outcome of the coupling (PubMed:31045362, PubMed:31304040). The highly reducing polyketide synthase VdtX is not involved in viriditoxin synthesis, but might possibly play a role in the production of additional metabolites not identified yet (PubMed:31045362, PubMed:31304040).</text>
</comment>
<comment type="catalytic activity">
    <reaction evidence="2">
        <text>9,10-dihydroxy-7-methoxy-3-(2-oxopropyl)-1H-benzo[g]isochromen-1-one + NADPH + O2 + H(+) = methyl 2-[(3S)-9,10-dihydroxy-7-methoxy-1-oxo-1H,3H,4H-naphtho[2,3-c]pyran-3-yl]acetate + NADP(+) + H2O</text>
        <dbReference type="Rhea" id="RHEA:62868"/>
        <dbReference type="ChEBI" id="CHEBI:15377"/>
        <dbReference type="ChEBI" id="CHEBI:15378"/>
        <dbReference type="ChEBI" id="CHEBI:15379"/>
        <dbReference type="ChEBI" id="CHEBI:57783"/>
        <dbReference type="ChEBI" id="CHEBI:58349"/>
        <dbReference type="ChEBI" id="CHEBI:146010"/>
        <dbReference type="ChEBI" id="CHEBI:146012"/>
    </reaction>
    <physiologicalReaction direction="left-to-right" evidence="2">
        <dbReference type="Rhea" id="RHEA:62869"/>
    </physiologicalReaction>
</comment>
<comment type="catalytic activity">
    <reaction evidence="2">
        <text>(3S)-9,10-dihydroxy-7-methoxy-3-(2-oxopropyl)-1H,3H,4H-naphtho[2,3-c]pyran-1-one + NADPH + O2 + H(+) = semiviriditoxin + NADP(+) + H2O</text>
        <dbReference type="Rhea" id="RHEA:62872"/>
        <dbReference type="ChEBI" id="CHEBI:15377"/>
        <dbReference type="ChEBI" id="CHEBI:15378"/>
        <dbReference type="ChEBI" id="CHEBI:15379"/>
        <dbReference type="ChEBI" id="CHEBI:57783"/>
        <dbReference type="ChEBI" id="CHEBI:58349"/>
        <dbReference type="ChEBI" id="CHEBI:146008"/>
        <dbReference type="ChEBI" id="CHEBI:146011"/>
    </reaction>
    <physiologicalReaction direction="left-to-right" evidence="2">
        <dbReference type="Rhea" id="RHEA:62873"/>
    </physiologicalReaction>
</comment>
<comment type="cofactor">
    <cofactor evidence="1">
        <name>FAD</name>
        <dbReference type="ChEBI" id="CHEBI:57692"/>
    </cofactor>
    <text evidence="1">Binds 1 FAD per subunit.</text>
</comment>
<comment type="pathway">
    <text evidence="2 3">Secondary metabolite biosynthesis.</text>
</comment>
<comment type="disruption phenotype">
    <text evidence="3">Impairs the conversion of the ketone group into a methyl-ester group to yield semi-viriditoxin.</text>
</comment>
<comment type="similarity">
    <text evidence="5">Belongs to the FAD-binding monooxygenase family.</text>
</comment>